<reference key="1">
    <citation type="journal article" date="2008" name="Appl. Environ. Microbiol.">
        <title>The genome sequence of the metal-mobilizing, extremely thermoacidophilic archaeon Metallosphaera sedula provides insights into bioleaching-associated metabolism.</title>
        <authorList>
            <person name="Auernik K.S."/>
            <person name="Maezato Y."/>
            <person name="Blum P.H."/>
            <person name="Kelly R.M."/>
        </authorList>
    </citation>
    <scope>NUCLEOTIDE SEQUENCE [LARGE SCALE GENOMIC DNA]</scope>
    <source>
        <strain>ATCC 51363 / DSM 5348 / JCM 9185 / NBRC 15509 / TH2</strain>
    </source>
</reference>
<name>RL24_METS5</name>
<comment type="function">
    <text evidence="1">One of two assembly initiator proteins, it binds directly to the 5'-end of the 23S rRNA, where it nucleates assembly of the 50S subunit.</text>
</comment>
<comment type="function">
    <text evidence="1">Located at the polypeptide exit tunnel on the outside of the subunit.</text>
</comment>
<comment type="subunit">
    <text evidence="1">Part of the 50S ribosomal subunit.</text>
</comment>
<comment type="similarity">
    <text evidence="1">Belongs to the universal ribosomal protein uL24 family.</text>
</comment>
<accession>A4YCX7</accession>
<gene>
    <name evidence="1" type="primary">rpl24</name>
    <name type="ordered locus">Msed_0102</name>
</gene>
<proteinExistence type="inferred from homology"/>
<evidence type="ECO:0000255" key="1">
    <source>
        <dbReference type="HAMAP-Rule" id="MF_01326"/>
    </source>
</evidence>
<evidence type="ECO:0000256" key="2">
    <source>
        <dbReference type="SAM" id="MobiDB-lite"/>
    </source>
</evidence>
<evidence type="ECO:0000305" key="3"/>
<sequence>MVSSKLIAPLSDELAKEYGMKRIGIRKDDTVRVMRGDNYGFEGKVTQVFPESGRIAIEGLTRKKADGTPVYIKIHASKVEITKLNTNDPRRKDIINRKASRQKEEQGGKAQ</sequence>
<protein>
    <recommendedName>
        <fullName evidence="1">Large ribosomal subunit protein uL24</fullName>
    </recommendedName>
    <alternativeName>
        <fullName evidence="3">50S ribosomal protein L24</fullName>
    </alternativeName>
</protein>
<keyword id="KW-1185">Reference proteome</keyword>
<keyword id="KW-0687">Ribonucleoprotein</keyword>
<keyword id="KW-0689">Ribosomal protein</keyword>
<keyword id="KW-0694">RNA-binding</keyword>
<keyword id="KW-0699">rRNA-binding</keyword>
<feature type="chain" id="PRO_0000355735" description="Large ribosomal subunit protein uL24">
    <location>
        <begin position="1"/>
        <end position="111"/>
    </location>
</feature>
<feature type="region of interest" description="Disordered" evidence="2">
    <location>
        <begin position="85"/>
        <end position="111"/>
    </location>
</feature>
<feature type="compositionally biased region" description="Basic and acidic residues" evidence="2">
    <location>
        <begin position="88"/>
        <end position="111"/>
    </location>
</feature>
<dbReference type="EMBL" id="CP000682">
    <property type="protein sequence ID" value="ABP94279.1"/>
    <property type="molecule type" value="Genomic_DNA"/>
</dbReference>
<dbReference type="SMR" id="A4YCX7"/>
<dbReference type="STRING" id="399549.Msed_0102"/>
<dbReference type="KEGG" id="mse:Msed_0102"/>
<dbReference type="eggNOG" id="arCOG04094">
    <property type="taxonomic scope" value="Archaea"/>
</dbReference>
<dbReference type="HOGENOM" id="CLU_093240_2_1_2"/>
<dbReference type="Proteomes" id="UP000000242">
    <property type="component" value="Chromosome"/>
</dbReference>
<dbReference type="GO" id="GO:0015934">
    <property type="term" value="C:large ribosomal subunit"/>
    <property type="evidence" value="ECO:0007669"/>
    <property type="project" value="InterPro"/>
</dbReference>
<dbReference type="GO" id="GO:0019843">
    <property type="term" value="F:rRNA binding"/>
    <property type="evidence" value="ECO:0007669"/>
    <property type="project" value="UniProtKB-UniRule"/>
</dbReference>
<dbReference type="GO" id="GO:0003735">
    <property type="term" value="F:structural constituent of ribosome"/>
    <property type="evidence" value="ECO:0007669"/>
    <property type="project" value="InterPro"/>
</dbReference>
<dbReference type="GO" id="GO:0006412">
    <property type="term" value="P:translation"/>
    <property type="evidence" value="ECO:0007669"/>
    <property type="project" value="UniProtKB-UniRule"/>
</dbReference>
<dbReference type="CDD" id="cd06089">
    <property type="entry name" value="KOW_RPL26"/>
    <property type="match status" value="1"/>
</dbReference>
<dbReference type="Gene3D" id="2.30.30.30">
    <property type="match status" value="1"/>
</dbReference>
<dbReference type="HAMAP" id="MF_01326_A">
    <property type="entry name" value="Ribosomal_uL24_A"/>
    <property type="match status" value="1"/>
</dbReference>
<dbReference type="InterPro" id="IPR005824">
    <property type="entry name" value="KOW"/>
</dbReference>
<dbReference type="InterPro" id="IPR014722">
    <property type="entry name" value="Rib_uL2_dom2"/>
</dbReference>
<dbReference type="InterPro" id="IPR005756">
    <property type="entry name" value="Ribosomal_uL24_euk/arc"/>
</dbReference>
<dbReference type="InterPro" id="IPR041988">
    <property type="entry name" value="Ribosomal_uL24_KOW"/>
</dbReference>
<dbReference type="InterPro" id="IPR008991">
    <property type="entry name" value="Translation_prot_SH3-like_sf"/>
</dbReference>
<dbReference type="NCBIfam" id="TIGR01080">
    <property type="entry name" value="rplX_A_E"/>
    <property type="match status" value="1"/>
</dbReference>
<dbReference type="PANTHER" id="PTHR11143">
    <property type="entry name" value="60S RIBOSOMAL PROTEIN L26 FAMILY MEMBER"/>
    <property type="match status" value="1"/>
</dbReference>
<dbReference type="Pfam" id="PF00467">
    <property type="entry name" value="KOW"/>
    <property type="match status" value="1"/>
</dbReference>
<dbReference type="Pfam" id="PF16906">
    <property type="entry name" value="Ribosomal_L26"/>
    <property type="match status" value="1"/>
</dbReference>
<dbReference type="SMART" id="SM00739">
    <property type="entry name" value="KOW"/>
    <property type="match status" value="1"/>
</dbReference>
<dbReference type="SUPFAM" id="SSF50104">
    <property type="entry name" value="Translation proteins SH3-like domain"/>
    <property type="match status" value="1"/>
</dbReference>
<organism>
    <name type="scientific">Metallosphaera sedula (strain ATCC 51363 / DSM 5348 / JCM 9185 / NBRC 15509 / TH2)</name>
    <dbReference type="NCBI Taxonomy" id="399549"/>
    <lineage>
        <taxon>Archaea</taxon>
        <taxon>Thermoproteota</taxon>
        <taxon>Thermoprotei</taxon>
        <taxon>Sulfolobales</taxon>
        <taxon>Sulfolobaceae</taxon>
        <taxon>Metallosphaera</taxon>
    </lineage>
</organism>